<gene>
    <name evidence="1" type="primary">tal</name>
    <name type="ordered locus">Gbem_0610</name>
</gene>
<comment type="function">
    <text evidence="1">Transaldolase is important for the balance of metabolites in the pentose-phosphate pathway.</text>
</comment>
<comment type="catalytic activity">
    <reaction evidence="1">
        <text>D-sedoheptulose 7-phosphate + D-glyceraldehyde 3-phosphate = D-erythrose 4-phosphate + beta-D-fructose 6-phosphate</text>
        <dbReference type="Rhea" id="RHEA:17053"/>
        <dbReference type="ChEBI" id="CHEBI:16897"/>
        <dbReference type="ChEBI" id="CHEBI:57483"/>
        <dbReference type="ChEBI" id="CHEBI:57634"/>
        <dbReference type="ChEBI" id="CHEBI:59776"/>
        <dbReference type="EC" id="2.2.1.2"/>
    </reaction>
</comment>
<comment type="pathway">
    <text evidence="1">Carbohydrate degradation; pentose phosphate pathway; D-glyceraldehyde 3-phosphate and beta-D-fructose 6-phosphate from D-ribose 5-phosphate and D-xylulose 5-phosphate (non-oxidative stage): step 2/3.</text>
</comment>
<comment type="subcellular location">
    <subcellularLocation>
        <location evidence="1">Cytoplasm</location>
    </subcellularLocation>
</comment>
<comment type="similarity">
    <text evidence="1">Belongs to the transaldolase family. Type 3B subfamily.</text>
</comment>
<sequence length="214" mass="23386">MKFFIDTADVKEIREANELGLVDGVTTNPSLIAKSGRRFEEVIKEITGIVDGPISAEVISLEHDGMIAEATELAKIHPNIVIKLPMTPEGLKATKTLYKRGIKTNVTLIFTPMQALLAAKAGATYVSPFVGRLDDISQNGMGIIQEIRTIFDNYGMDAEIIVASIRNPIHVLDSALIGADVCTIPYSVMLQLAKHPLTDAGIKKFLEDWEKVPK</sequence>
<organism>
    <name type="scientific">Citrifermentans bemidjiense (strain ATCC BAA-1014 / DSM 16622 / JCM 12645 / Bem)</name>
    <name type="common">Geobacter bemidjiensis</name>
    <dbReference type="NCBI Taxonomy" id="404380"/>
    <lineage>
        <taxon>Bacteria</taxon>
        <taxon>Pseudomonadati</taxon>
        <taxon>Thermodesulfobacteriota</taxon>
        <taxon>Desulfuromonadia</taxon>
        <taxon>Geobacterales</taxon>
        <taxon>Geobacteraceae</taxon>
        <taxon>Citrifermentans</taxon>
    </lineage>
</organism>
<dbReference type="EC" id="2.2.1.2" evidence="1"/>
<dbReference type="EMBL" id="CP001124">
    <property type="protein sequence ID" value="ACH37638.1"/>
    <property type="molecule type" value="Genomic_DNA"/>
</dbReference>
<dbReference type="RefSeq" id="WP_012529045.1">
    <property type="nucleotide sequence ID" value="NC_011146.1"/>
</dbReference>
<dbReference type="SMR" id="B5ED52"/>
<dbReference type="STRING" id="404380.Gbem_0610"/>
<dbReference type="KEGG" id="gbm:Gbem_0610"/>
<dbReference type="eggNOG" id="COG0176">
    <property type="taxonomic scope" value="Bacteria"/>
</dbReference>
<dbReference type="HOGENOM" id="CLU_079764_0_0_7"/>
<dbReference type="OrthoDB" id="9807051at2"/>
<dbReference type="UniPathway" id="UPA00115">
    <property type="reaction ID" value="UER00414"/>
</dbReference>
<dbReference type="Proteomes" id="UP000008825">
    <property type="component" value="Chromosome"/>
</dbReference>
<dbReference type="GO" id="GO:0005737">
    <property type="term" value="C:cytoplasm"/>
    <property type="evidence" value="ECO:0007669"/>
    <property type="project" value="UniProtKB-SubCell"/>
</dbReference>
<dbReference type="GO" id="GO:0016832">
    <property type="term" value="F:aldehyde-lyase activity"/>
    <property type="evidence" value="ECO:0007669"/>
    <property type="project" value="InterPro"/>
</dbReference>
<dbReference type="GO" id="GO:0004801">
    <property type="term" value="F:transaldolase activity"/>
    <property type="evidence" value="ECO:0007669"/>
    <property type="project" value="UniProtKB-UniRule"/>
</dbReference>
<dbReference type="GO" id="GO:0005975">
    <property type="term" value="P:carbohydrate metabolic process"/>
    <property type="evidence" value="ECO:0007669"/>
    <property type="project" value="InterPro"/>
</dbReference>
<dbReference type="GO" id="GO:0006098">
    <property type="term" value="P:pentose-phosphate shunt"/>
    <property type="evidence" value="ECO:0007669"/>
    <property type="project" value="UniProtKB-UniRule"/>
</dbReference>
<dbReference type="CDD" id="cd00956">
    <property type="entry name" value="Transaldolase_FSA"/>
    <property type="match status" value="1"/>
</dbReference>
<dbReference type="FunFam" id="3.20.20.70:FF:000018">
    <property type="entry name" value="Probable transaldolase"/>
    <property type="match status" value="1"/>
</dbReference>
<dbReference type="Gene3D" id="3.20.20.70">
    <property type="entry name" value="Aldolase class I"/>
    <property type="match status" value="1"/>
</dbReference>
<dbReference type="HAMAP" id="MF_00494">
    <property type="entry name" value="Transaldolase_3b"/>
    <property type="match status" value="1"/>
</dbReference>
<dbReference type="InterPro" id="IPR013785">
    <property type="entry name" value="Aldolase_TIM"/>
</dbReference>
<dbReference type="InterPro" id="IPR001585">
    <property type="entry name" value="TAL/FSA"/>
</dbReference>
<dbReference type="InterPro" id="IPR022999">
    <property type="entry name" value="Transaldolase_3B"/>
</dbReference>
<dbReference type="InterPro" id="IPR004731">
    <property type="entry name" value="Transaldolase_3B/F6P_aldolase"/>
</dbReference>
<dbReference type="InterPro" id="IPR018225">
    <property type="entry name" value="Transaldolase_AS"/>
</dbReference>
<dbReference type="InterPro" id="IPR033919">
    <property type="entry name" value="TSA/FSA_arc/bac"/>
</dbReference>
<dbReference type="NCBIfam" id="TIGR00875">
    <property type="entry name" value="fsa_talC_mipB"/>
    <property type="match status" value="1"/>
</dbReference>
<dbReference type="PANTHER" id="PTHR10683:SF40">
    <property type="entry name" value="FRUCTOSE-6-PHOSPHATE ALDOLASE 1-RELATED"/>
    <property type="match status" value="1"/>
</dbReference>
<dbReference type="PANTHER" id="PTHR10683">
    <property type="entry name" value="TRANSALDOLASE"/>
    <property type="match status" value="1"/>
</dbReference>
<dbReference type="Pfam" id="PF00923">
    <property type="entry name" value="TAL_FSA"/>
    <property type="match status" value="1"/>
</dbReference>
<dbReference type="SUPFAM" id="SSF51569">
    <property type="entry name" value="Aldolase"/>
    <property type="match status" value="1"/>
</dbReference>
<dbReference type="PROSITE" id="PS01054">
    <property type="entry name" value="TRANSALDOLASE_1"/>
    <property type="match status" value="1"/>
</dbReference>
<dbReference type="PROSITE" id="PS00958">
    <property type="entry name" value="TRANSALDOLASE_2"/>
    <property type="match status" value="1"/>
</dbReference>
<feature type="chain" id="PRO_1000126316" description="Probable transaldolase">
    <location>
        <begin position="1"/>
        <end position="214"/>
    </location>
</feature>
<feature type="active site" description="Schiff-base intermediate with substrate" evidence="1">
    <location>
        <position position="83"/>
    </location>
</feature>
<keyword id="KW-0963">Cytoplasm</keyword>
<keyword id="KW-0570">Pentose shunt</keyword>
<keyword id="KW-1185">Reference proteome</keyword>
<keyword id="KW-0704">Schiff base</keyword>
<keyword id="KW-0808">Transferase</keyword>
<protein>
    <recommendedName>
        <fullName evidence="1">Probable transaldolase</fullName>
        <ecNumber evidence="1">2.2.1.2</ecNumber>
    </recommendedName>
</protein>
<name>TAL_CITBB</name>
<accession>B5ED52</accession>
<proteinExistence type="inferred from homology"/>
<evidence type="ECO:0000255" key="1">
    <source>
        <dbReference type="HAMAP-Rule" id="MF_00494"/>
    </source>
</evidence>
<reference key="1">
    <citation type="submission" date="2008-07" db="EMBL/GenBank/DDBJ databases">
        <title>Complete sequence of Geobacter bemidjiensis BEM.</title>
        <authorList>
            <consortium name="US DOE Joint Genome Institute"/>
            <person name="Lucas S."/>
            <person name="Copeland A."/>
            <person name="Lapidus A."/>
            <person name="Glavina del Rio T."/>
            <person name="Dalin E."/>
            <person name="Tice H."/>
            <person name="Bruce D."/>
            <person name="Goodwin L."/>
            <person name="Pitluck S."/>
            <person name="Kiss H."/>
            <person name="Brettin T."/>
            <person name="Detter J.C."/>
            <person name="Han C."/>
            <person name="Kuske C.R."/>
            <person name="Schmutz J."/>
            <person name="Larimer F."/>
            <person name="Land M."/>
            <person name="Hauser L."/>
            <person name="Kyrpides N."/>
            <person name="Lykidis A."/>
            <person name="Lovley D."/>
            <person name="Richardson P."/>
        </authorList>
    </citation>
    <scope>NUCLEOTIDE SEQUENCE [LARGE SCALE GENOMIC DNA]</scope>
    <source>
        <strain>ATCC BAA-1014 / DSM 16622 / JCM 12645 / Bem</strain>
    </source>
</reference>